<accession>Q8VDR7</accession>
<accession>Q3U4A6</accession>
<keyword id="KW-0456">Lyase</keyword>
<keyword id="KW-0520">NAD</keyword>
<keyword id="KW-1185">Reference proteome</keyword>
<proteinExistence type="evidence at transcript level"/>
<reference key="1">
    <citation type="journal article" date="2005" name="Science">
        <title>The transcriptional landscape of the mammalian genome.</title>
        <authorList>
            <person name="Carninci P."/>
            <person name="Kasukawa T."/>
            <person name="Katayama S."/>
            <person name="Gough J."/>
            <person name="Frith M.C."/>
            <person name="Maeda N."/>
            <person name="Oyama R."/>
            <person name="Ravasi T."/>
            <person name="Lenhard B."/>
            <person name="Wells C."/>
            <person name="Kodzius R."/>
            <person name="Shimokawa K."/>
            <person name="Bajic V.B."/>
            <person name="Brenner S.E."/>
            <person name="Batalov S."/>
            <person name="Forrest A.R."/>
            <person name="Zavolan M."/>
            <person name="Davis M.J."/>
            <person name="Wilming L.G."/>
            <person name="Aidinis V."/>
            <person name="Allen J.E."/>
            <person name="Ambesi-Impiombato A."/>
            <person name="Apweiler R."/>
            <person name="Aturaliya R.N."/>
            <person name="Bailey T.L."/>
            <person name="Bansal M."/>
            <person name="Baxter L."/>
            <person name="Beisel K.W."/>
            <person name="Bersano T."/>
            <person name="Bono H."/>
            <person name="Chalk A.M."/>
            <person name="Chiu K.P."/>
            <person name="Choudhary V."/>
            <person name="Christoffels A."/>
            <person name="Clutterbuck D.R."/>
            <person name="Crowe M.L."/>
            <person name="Dalla E."/>
            <person name="Dalrymple B.P."/>
            <person name="de Bono B."/>
            <person name="Della Gatta G."/>
            <person name="di Bernardo D."/>
            <person name="Down T."/>
            <person name="Engstrom P."/>
            <person name="Fagiolini M."/>
            <person name="Faulkner G."/>
            <person name="Fletcher C.F."/>
            <person name="Fukushima T."/>
            <person name="Furuno M."/>
            <person name="Futaki S."/>
            <person name="Gariboldi M."/>
            <person name="Georgii-Hemming P."/>
            <person name="Gingeras T.R."/>
            <person name="Gojobori T."/>
            <person name="Green R.E."/>
            <person name="Gustincich S."/>
            <person name="Harbers M."/>
            <person name="Hayashi Y."/>
            <person name="Hensch T.K."/>
            <person name="Hirokawa N."/>
            <person name="Hill D."/>
            <person name="Huminiecki L."/>
            <person name="Iacono M."/>
            <person name="Ikeo K."/>
            <person name="Iwama A."/>
            <person name="Ishikawa T."/>
            <person name="Jakt M."/>
            <person name="Kanapin A."/>
            <person name="Katoh M."/>
            <person name="Kawasawa Y."/>
            <person name="Kelso J."/>
            <person name="Kitamura H."/>
            <person name="Kitano H."/>
            <person name="Kollias G."/>
            <person name="Krishnan S.P."/>
            <person name="Kruger A."/>
            <person name="Kummerfeld S.K."/>
            <person name="Kurochkin I.V."/>
            <person name="Lareau L.F."/>
            <person name="Lazarevic D."/>
            <person name="Lipovich L."/>
            <person name="Liu J."/>
            <person name="Liuni S."/>
            <person name="McWilliam S."/>
            <person name="Madan Babu M."/>
            <person name="Madera M."/>
            <person name="Marchionni L."/>
            <person name="Matsuda H."/>
            <person name="Matsuzawa S."/>
            <person name="Miki H."/>
            <person name="Mignone F."/>
            <person name="Miyake S."/>
            <person name="Morris K."/>
            <person name="Mottagui-Tabar S."/>
            <person name="Mulder N."/>
            <person name="Nakano N."/>
            <person name="Nakauchi H."/>
            <person name="Ng P."/>
            <person name="Nilsson R."/>
            <person name="Nishiguchi S."/>
            <person name="Nishikawa S."/>
            <person name="Nori F."/>
            <person name="Ohara O."/>
            <person name="Okazaki Y."/>
            <person name="Orlando V."/>
            <person name="Pang K.C."/>
            <person name="Pavan W.J."/>
            <person name="Pavesi G."/>
            <person name="Pesole G."/>
            <person name="Petrovsky N."/>
            <person name="Piazza S."/>
            <person name="Reed J."/>
            <person name="Reid J.F."/>
            <person name="Ring B.Z."/>
            <person name="Ringwald M."/>
            <person name="Rost B."/>
            <person name="Ruan Y."/>
            <person name="Salzberg S.L."/>
            <person name="Sandelin A."/>
            <person name="Schneider C."/>
            <person name="Schoenbach C."/>
            <person name="Sekiguchi K."/>
            <person name="Semple C.A."/>
            <person name="Seno S."/>
            <person name="Sessa L."/>
            <person name="Sheng Y."/>
            <person name="Shibata Y."/>
            <person name="Shimada H."/>
            <person name="Shimada K."/>
            <person name="Silva D."/>
            <person name="Sinclair B."/>
            <person name="Sperling S."/>
            <person name="Stupka E."/>
            <person name="Sugiura K."/>
            <person name="Sultana R."/>
            <person name="Takenaka Y."/>
            <person name="Taki K."/>
            <person name="Tammoja K."/>
            <person name="Tan S.L."/>
            <person name="Tang S."/>
            <person name="Taylor M.S."/>
            <person name="Tegner J."/>
            <person name="Teichmann S.A."/>
            <person name="Ueda H.R."/>
            <person name="van Nimwegen E."/>
            <person name="Verardo R."/>
            <person name="Wei C.L."/>
            <person name="Yagi K."/>
            <person name="Yamanishi H."/>
            <person name="Zabarovsky E."/>
            <person name="Zhu S."/>
            <person name="Zimmer A."/>
            <person name="Hide W."/>
            <person name="Bult C."/>
            <person name="Grimmond S.M."/>
            <person name="Teasdale R.D."/>
            <person name="Liu E.T."/>
            <person name="Brusic V."/>
            <person name="Quackenbush J."/>
            <person name="Wahlestedt C."/>
            <person name="Mattick J.S."/>
            <person name="Hume D.A."/>
            <person name="Kai C."/>
            <person name="Sasaki D."/>
            <person name="Tomaru Y."/>
            <person name="Fukuda S."/>
            <person name="Kanamori-Katayama M."/>
            <person name="Suzuki M."/>
            <person name="Aoki J."/>
            <person name="Arakawa T."/>
            <person name="Iida J."/>
            <person name="Imamura K."/>
            <person name="Itoh M."/>
            <person name="Kato T."/>
            <person name="Kawaji H."/>
            <person name="Kawagashira N."/>
            <person name="Kawashima T."/>
            <person name="Kojima M."/>
            <person name="Kondo S."/>
            <person name="Konno H."/>
            <person name="Nakano K."/>
            <person name="Ninomiya N."/>
            <person name="Nishio T."/>
            <person name="Okada M."/>
            <person name="Plessy C."/>
            <person name="Shibata K."/>
            <person name="Shiraki T."/>
            <person name="Suzuki S."/>
            <person name="Tagami M."/>
            <person name="Waki K."/>
            <person name="Watahiki A."/>
            <person name="Okamura-Oho Y."/>
            <person name="Suzuki H."/>
            <person name="Kawai J."/>
            <person name="Hayashizaki Y."/>
        </authorList>
    </citation>
    <scope>NUCLEOTIDE SEQUENCE [LARGE SCALE MRNA]</scope>
    <source>
        <strain>NOD</strain>
    </source>
</reference>
<reference key="2">
    <citation type="journal article" date="2004" name="Genome Res.">
        <title>The status, quality, and expansion of the NIH full-length cDNA project: the Mammalian Gene Collection (MGC).</title>
        <authorList>
            <consortium name="The MGC Project Team"/>
        </authorList>
    </citation>
    <scope>NUCLEOTIDE SEQUENCE [LARGE SCALE MRNA]</scope>
</reference>
<gene>
    <name type="primary">Tgds</name>
</gene>
<feature type="chain" id="PRO_0000183251" description="dTDP-D-glucose 4,6-dehydratase">
    <location>
        <begin position="1"/>
        <end position="355"/>
    </location>
</feature>
<feature type="active site" description="Proton donor" evidence="1">
    <location>
        <position position="143"/>
    </location>
</feature>
<feature type="active site" description="Proton acceptor" evidence="1">
    <location>
        <position position="144"/>
    </location>
</feature>
<feature type="active site" description="Proton acceptor" evidence="1">
    <location>
        <position position="166"/>
    </location>
</feature>
<feature type="binding site" evidence="1">
    <location>
        <position position="142"/>
    </location>
    <ligand>
        <name>substrate</name>
    </ligand>
</feature>
<feature type="sequence conflict" description="In Ref. 2; AAH21419." evidence="2" ref="2">
    <original>K</original>
    <variation>R</variation>
    <location>
        <position position="205"/>
    </location>
</feature>
<protein>
    <recommendedName>
        <fullName>dTDP-D-glucose 4,6-dehydratase</fullName>
        <ecNumber>4.2.1.46</ecNumber>
    </recommendedName>
</protein>
<evidence type="ECO:0000250" key="1"/>
<evidence type="ECO:0000305" key="2"/>
<dbReference type="EC" id="4.2.1.46"/>
<dbReference type="EMBL" id="AK154341">
    <property type="protein sequence ID" value="BAE32527.1"/>
    <property type="molecule type" value="mRNA"/>
</dbReference>
<dbReference type="EMBL" id="BC021419">
    <property type="protein sequence ID" value="AAH21419.1"/>
    <property type="molecule type" value="mRNA"/>
</dbReference>
<dbReference type="CCDS" id="CCDS27332.1"/>
<dbReference type="RefSeq" id="NP_083854.3">
    <property type="nucleotide sequence ID" value="NM_029578.3"/>
</dbReference>
<dbReference type="SMR" id="Q8VDR7"/>
<dbReference type="FunCoup" id="Q8VDR7">
    <property type="interactions" value="54"/>
</dbReference>
<dbReference type="STRING" id="10090.ENSMUSP00000022727"/>
<dbReference type="iPTMnet" id="Q8VDR7"/>
<dbReference type="PhosphoSitePlus" id="Q8VDR7"/>
<dbReference type="jPOST" id="Q8VDR7"/>
<dbReference type="PaxDb" id="10090-ENSMUSP00000022727"/>
<dbReference type="Antibodypedia" id="24784">
    <property type="antibodies" value="101 antibodies from 18 providers"/>
</dbReference>
<dbReference type="DNASU" id="76355"/>
<dbReference type="Ensembl" id="ENSMUST00000022727.10">
    <property type="protein sequence ID" value="ENSMUSP00000022727.9"/>
    <property type="gene ID" value="ENSMUSG00000022130.11"/>
</dbReference>
<dbReference type="GeneID" id="76355"/>
<dbReference type="KEGG" id="mmu:76355"/>
<dbReference type="UCSC" id="uc007uyo.2">
    <property type="organism name" value="mouse"/>
</dbReference>
<dbReference type="AGR" id="MGI:1923605"/>
<dbReference type="CTD" id="23483"/>
<dbReference type="MGI" id="MGI:1923605">
    <property type="gene designation" value="Tgds"/>
</dbReference>
<dbReference type="VEuPathDB" id="HostDB:ENSMUSG00000022130"/>
<dbReference type="eggNOG" id="KOG0747">
    <property type="taxonomic scope" value="Eukaryota"/>
</dbReference>
<dbReference type="GeneTree" id="ENSGT00940000159196"/>
<dbReference type="HOGENOM" id="CLU_007383_1_14_1"/>
<dbReference type="InParanoid" id="Q8VDR7"/>
<dbReference type="OMA" id="KLIPLMC"/>
<dbReference type="OrthoDB" id="16464at2759"/>
<dbReference type="PhylomeDB" id="Q8VDR7"/>
<dbReference type="TreeFam" id="TF313892"/>
<dbReference type="BioGRID-ORCS" id="76355">
    <property type="hits" value="2 hits in 76 CRISPR screens"/>
</dbReference>
<dbReference type="PRO" id="PR:Q8VDR7"/>
<dbReference type="Proteomes" id="UP000000589">
    <property type="component" value="Chromosome 14"/>
</dbReference>
<dbReference type="RNAct" id="Q8VDR7">
    <property type="molecule type" value="protein"/>
</dbReference>
<dbReference type="Bgee" id="ENSMUSG00000022130">
    <property type="expression patterns" value="Expressed in animal zygote and 259 other cell types or tissues"/>
</dbReference>
<dbReference type="ExpressionAtlas" id="Q8VDR7">
    <property type="expression patterns" value="baseline and differential"/>
</dbReference>
<dbReference type="GO" id="GO:0008460">
    <property type="term" value="F:dTDP-glucose 4,6-dehydratase activity"/>
    <property type="evidence" value="ECO:0007669"/>
    <property type="project" value="UniProtKB-EC"/>
</dbReference>
<dbReference type="GO" id="GO:0009225">
    <property type="term" value="P:nucleotide-sugar metabolic process"/>
    <property type="evidence" value="ECO:0007669"/>
    <property type="project" value="InterPro"/>
</dbReference>
<dbReference type="CDD" id="cd05246">
    <property type="entry name" value="dTDP_GD_SDR_e"/>
    <property type="match status" value="1"/>
</dbReference>
<dbReference type="FunFam" id="3.40.50.720:FF:000304">
    <property type="entry name" value="UDP-glucose 4,6-dehydratase"/>
    <property type="match status" value="1"/>
</dbReference>
<dbReference type="Gene3D" id="3.40.50.720">
    <property type="entry name" value="NAD(P)-binding Rossmann-like Domain"/>
    <property type="match status" value="1"/>
</dbReference>
<dbReference type="Gene3D" id="3.90.25.10">
    <property type="entry name" value="UDP-galactose 4-epimerase, domain 1"/>
    <property type="match status" value="1"/>
</dbReference>
<dbReference type="InterPro" id="IPR005888">
    <property type="entry name" value="dTDP_Gluc_deHydtase"/>
</dbReference>
<dbReference type="InterPro" id="IPR016040">
    <property type="entry name" value="NAD(P)-bd_dom"/>
</dbReference>
<dbReference type="InterPro" id="IPR036291">
    <property type="entry name" value="NAD(P)-bd_dom_sf"/>
</dbReference>
<dbReference type="PANTHER" id="PTHR43000">
    <property type="entry name" value="DTDP-D-GLUCOSE 4,6-DEHYDRATASE-RELATED"/>
    <property type="match status" value="1"/>
</dbReference>
<dbReference type="Pfam" id="PF16363">
    <property type="entry name" value="GDP_Man_Dehyd"/>
    <property type="match status" value="1"/>
</dbReference>
<dbReference type="SUPFAM" id="SSF51735">
    <property type="entry name" value="NAD(P)-binding Rossmann-fold domains"/>
    <property type="match status" value="1"/>
</dbReference>
<sequence length="355" mass="40570">MSAASREERSGPPGSFAKRVLVTGGAGFIASHVIVSLVEDYPDYMIVNLDKLDYCASLKNLEPVSNKQNYKFIQGDICDSHFVKLLFEVEKIDIVLHFAAQTHVDLSFVRAFEFTYVNVYGTHVLVNAAYEAGVEKFIYVSTDEVYGGSLDQEFDESSPKQPTNPYASSKAAAECFVQSYWERYKFPVVITRSSNVYGPHQYPEKVIPKFISLLQHNRKCCIHGSGLQRRNFLYAADVVEAFLTVLTKGEPGEIYNIGTNFEMSVVQLAKELIQLIKETNSESETESWVDYVSDRPHNDMRYPMKSEKIHSLGWKPKVPWEEGIKKTVEWYRKNFHNWKNAEKALEPFPVQPPFM</sequence>
<comment type="catalytic activity">
    <reaction>
        <text>dTDP-alpha-D-glucose = dTDP-4-dehydro-6-deoxy-alpha-D-glucose + H2O</text>
        <dbReference type="Rhea" id="RHEA:17221"/>
        <dbReference type="ChEBI" id="CHEBI:15377"/>
        <dbReference type="ChEBI" id="CHEBI:57477"/>
        <dbReference type="ChEBI" id="CHEBI:57649"/>
        <dbReference type="EC" id="4.2.1.46"/>
    </reaction>
</comment>
<comment type="cofactor">
    <cofactor evidence="1">
        <name>NAD(+)</name>
        <dbReference type="ChEBI" id="CHEBI:57540"/>
    </cofactor>
</comment>
<comment type="similarity">
    <text evidence="2">Belongs to the NAD(P)-dependent epimerase/dehydratase family. dTDP-glucose dehydratase subfamily.</text>
</comment>
<name>TGDS_MOUSE</name>
<organism>
    <name type="scientific">Mus musculus</name>
    <name type="common">Mouse</name>
    <dbReference type="NCBI Taxonomy" id="10090"/>
    <lineage>
        <taxon>Eukaryota</taxon>
        <taxon>Metazoa</taxon>
        <taxon>Chordata</taxon>
        <taxon>Craniata</taxon>
        <taxon>Vertebrata</taxon>
        <taxon>Euteleostomi</taxon>
        <taxon>Mammalia</taxon>
        <taxon>Eutheria</taxon>
        <taxon>Euarchontoglires</taxon>
        <taxon>Glires</taxon>
        <taxon>Rodentia</taxon>
        <taxon>Myomorpha</taxon>
        <taxon>Muroidea</taxon>
        <taxon>Muridae</taxon>
        <taxon>Murinae</taxon>
        <taxon>Mus</taxon>
        <taxon>Mus</taxon>
    </lineage>
</organism>